<proteinExistence type="evidence at transcript level"/>
<dbReference type="EMBL" id="AM711639">
    <property type="protein sequence ID" value="CAM98348.1"/>
    <property type="molecule type" value="Genomic_DNA"/>
</dbReference>
<dbReference type="RefSeq" id="YP_001430062.1">
    <property type="nucleotide sequence ID" value="NC_009765.1"/>
</dbReference>
<dbReference type="SMR" id="A7M920"/>
<dbReference type="GeneID" id="5536803"/>
<dbReference type="GO" id="GO:0009536">
    <property type="term" value="C:plastid"/>
    <property type="evidence" value="ECO:0007669"/>
    <property type="project" value="UniProtKB-SubCell"/>
</dbReference>
<dbReference type="GO" id="GO:1990904">
    <property type="term" value="C:ribonucleoprotein complex"/>
    <property type="evidence" value="ECO:0007669"/>
    <property type="project" value="UniProtKB-KW"/>
</dbReference>
<dbReference type="GO" id="GO:0005840">
    <property type="term" value="C:ribosome"/>
    <property type="evidence" value="ECO:0007669"/>
    <property type="project" value="UniProtKB-KW"/>
</dbReference>
<dbReference type="GO" id="GO:0019843">
    <property type="term" value="F:rRNA binding"/>
    <property type="evidence" value="ECO:0007669"/>
    <property type="project" value="UniProtKB-KW"/>
</dbReference>
<dbReference type="GO" id="GO:0003735">
    <property type="term" value="F:structural constituent of ribosome"/>
    <property type="evidence" value="ECO:0007669"/>
    <property type="project" value="InterPro"/>
</dbReference>
<dbReference type="GO" id="GO:0006412">
    <property type="term" value="P:translation"/>
    <property type="evidence" value="ECO:0007669"/>
    <property type="project" value="InterPro"/>
</dbReference>
<dbReference type="CDD" id="cd07026">
    <property type="entry name" value="Ribosomal_L20"/>
    <property type="match status" value="1"/>
</dbReference>
<dbReference type="FunFam" id="1.10.1900.20:FF:000001">
    <property type="entry name" value="50S ribosomal protein L20"/>
    <property type="match status" value="1"/>
</dbReference>
<dbReference type="Gene3D" id="6.10.160.10">
    <property type="match status" value="1"/>
</dbReference>
<dbReference type="Gene3D" id="1.10.1900.20">
    <property type="entry name" value="Ribosomal protein L20"/>
    <property type="match status" value="1"/>
</dbReference>
<dbReference type="HAMAP" id="MF_00382">
    <property type="entry name" value="Ribosomal_bL20"/>
    <property type="match status" value="1"/>
</dbReference>
<dbReference type="InterPro" id="IPR005813">
    <property type="entry name" value="Ribosomal_bL20"/>
</dbReference>
<dbReference type="InterPro" id="IPR049946">
    <property type="entry name" value="RIBOSOMAL_L20_CS"/>
</dbReference>
<dbReference type="InterPro" id="IPR035566">
    <property type="entry name" value="Ribosomal_protein_bL20_C"/>
</dbReference>
<dbReference type="NCBIfam" id="TIGR01032">
    <property type="entry name" value="rplT_bact"/>
    <property type="match status" value="1"/>
</dbReference>
<dbReference type="PANTHER" id="PTHR10986">
    <property type="entry name" value="39S RIBOSOMAL PROTEIN L20"/>
    <property type="match status" value="1"/>
</dbReference>
<dbReference type="Pfam" id="PF00453">
    <property type="entry name" value="Ribosomal_L20"/>
    <property type="match status" value="1"/>
</dbReference>
<dbReference type="PRINTS" id="PR00062">
    <property type="entry name" value="RIBOSOMALL20"/>
</dbReference>
<dbReference type="SUPFAM" id="SSF74731">
    <property type="entry name" value="Ribosomal protein L20"/>
    <property type="match status" value="1"/>
</dbReference>
<dbReference type="PROSITE" id="PS00937">
    <property type="entry name" value="RIBOSOMAL_L20"/>
    <property type="match status" value="1"/>
</dbReference>
<evidence type="ECO:0000250" key="1"/>
<evidence type="ECO:0000305" key="2"/>
<geneLocation type="plastid"/>
<feature type="chain" id="PRO_0000308466" description="Large ribosomal subunit protein bL20c">
    <location>
        <begin position="1"/>
        <end position="120"/>
    </location>
</feature>
<reference key="1">
    <citation type="journal article" date="2007" name="BMC Plant Biol.">
        <title>Complete DNA sequences of the plastid genomes of two parasitic flowering plant species, Cuscuta reflexa and Cuscuta gronovii.</title>
        <authorList>
            <person name="Funk H.T."/>
            <person name="Berg S."/>
            <person name="Krupinska K."/>
            <person name="Maier U.-G."/>
            <person name="Krause K."/>
        </authorList>
    </citation>
    <scope>NUCLEOTIDE SEQUENCE [LARGE SCALE GENOMIC DNA]</scope>
    <scope>ABSENCE OF RNA EDITING</scope>
</reference>
<name>RK20_CUSGR</name>
<keyword id="KW-0934">Plastid</keyword>
<keyword id="KW-0687">Ribonucleoprotein</keyword>
<keyword id="KW-0689">Ribosomal protein</keyword>
<keyword id="KW-0694">RNA-binding</keyword>
<keyword id="KW-0699">rRNA-binding</keyword>
<protein>
    <recommendedName>
        <fullName evidence="2">Large ribosomal subunit protein bL20c</fullName>
    </recommendedName>
    <alternativeName>
        <fullName>50S ribosomal protein L20, plastid</fullName>
    </alternativeName>
</protein>
<accession>A7M920</accession>
<organism>
    <name type="scientific">Cuscuta gronovii</name>
    <name type="common">Common dodder</name>
    <name type="synonym">Epithymum gronovii</name>
    <dbReference type="NCBI Taxonomy" id="35886"/>
    <lineage>
        <taxon>Eukaryota</taxon>
        <taxon>Viridiplantae</taxon>
        <taxon>Streptophyta</taxon>
        <taxon>Embryophyta</taxon>
        <taxon>Tracheophyta</taxon>
        <taxon>Spermatophyta</taxon>
        <taxon>Magnoliopsida</taxon>
        <taxon>eudicotyledons</taxon>
        <taxon>Gunneridae</taxon>
        <taxon>Pentapetalae</taxon>
        <taxon>asterids</taxon>
        <taxon>lamiids</taxon>
        <taxon>Solanales</taxon>
        <taxon>Convolvulaceae</taxon>
        <taxon>Cuscuteae</taxon>
        <taxon>Cuscuta</taxon>
        <taxon>Cuscuta subgen. Grammica</taxon>
        <taxon>Cuscuta sect. Oxycarpae</taxon>
    </lineage>
</organism>
<gene>
    <name type="primary">rpl20</name>
</gene>
<comment type="function">
    <text evidence="1">Binds directly to 23S ribosomal RNA and is necessary for the in vitro assembly process of the 50S ribosomal subunit. It is not involved in the protein synthesizing functions of that subunit (By similarity).</text>
</comment>
<comment type="subcellular location">
    <subcellularLocation>
        <location>Plastid</location>
    </subcellularLocation>
</comment>
<comment type="similarity">
    <text evidence="2">Belongs to the bacterial ribosomal protein bL20 family.</text>
</comment>
<comment type="caution">
    <text evidence="2">Young tissue from this organism is photosynthetic and contains some thylakoids, although the photosynthetic activity does not exceed the light compensation point.</text>
</comment>
<sequence>MTRIKRGSIARARRTKIRFFASKFRGSHSRLTRTIIQQGLRAFVSSQRDRHKKKRDFRRLWITRLNAAIRAIGVGYSYSASIHNLYKSQLILNRKILTQIAISNRNCLYMISNEILKSGV</sequence>